<protein>
    <recommendedName>
        <fullName evidence="1">2,3-diketo-L-gulonate reductase</fullName>
        <shortName evidence="1">2,3-DKG reductase</shortName>
        <ecNumber evidence="1">1.1.1.130</ecNumber>
    </recommendedName>
    <alternativeName>
        <fullName evidence="1">3-dehydro-L-gulonate 2-dehydrogenase</fullName>
    </alternativeName>
</protein>
<evidence type="ECO:0000255" key="1">
    <source>
        <dbReference type="HAMAP-Rule" id="MF_00820"/>
    </source>
</evidence>
<comment type="function">
    <text evidence="1">Catalyzes the reduction of 2,3-diketo-L-gulonate in the presence of NADH, to form 3-keto-L-gulonate.</text>
</comment>
<comment type="catalytic activity">
    <reaction evidence="1">
        <text>3-dehydro-L-gulonate + NAD(+) = 2,3-dioxo-L-gulonate + NADH + H(+)</text>
        <dbReference type="Rhea" id="RHEA:21924"/>
        <dbReference type="ChEBI" id="CHEBI:15378"/>
        <dbReference type="ChEBI" id="CHEBI:57441"/>
        <dbReference type="ChEBI" id="CHEBI:57540"/>
        <dbReference type="ChEBI" id="CHEBI:57655"/>
        <dbReference type="ChEBI" id="CHEBI:57945"/>
        <dbReference type="EC" id="1.1.1.130"/>
    </reaction>
</comment>
<comment type="catalytic activity">
    <reaction evidence="1">
        <text>3-dehydro-L-gulonate + NADP(+) = 2,3-dioxo-L-gulonate + NADPH + H(+)</text>
        <dbReference type="Rhea" id="RHEA:21928"/>
        <dbReference type="ChEBI" id="CHEBI:15378"/>
        <dbReference type="ChEBI" id="CHEBI:57441"/>
        <dbReference type="ChEBI" id="CHEBI:57655"/>
        <dbReference type="ChEBI" id="CHEBI:57783"/>
        <dbReference type="ChEBI" id="CHEBI:58349"/>
        <dbReference type="EC" id="1.1.1.130"/>
    </reaction>
</comment>
<comment type="subunit">
    <text evidence="1">Homodimer.</text>
</comment>
<comment type="subcellular location">
    <subcellularLocation>
        <location evidence="1">Cytoplasm</location>
    </subcellularLocation>
</comment>
<comment type="similarity">
    <text evidence="1">Belongs to the LDH2/MDH2 oxidoreductase family. DlgD subfamily.</text>
</comment>
<organism>
    <name type="scientific">Salmonella paratyphi A (strain ATCC 9150 / SARB42)</name>
    <dbReference type="NCBI Taxonomy" id="295319"/>
    <lineage>
        <taxon>Bacteria</taxon>
        <taxon>Pseudomonadati</taxon>
        <taxon>Pseudomonadota</taxon>
        <taxon>Gammaproteobacteria</taxon>
        <taxon>Enterobacterales</taxon>
        <taxon>Enterobacteriaceae</taxon>
        <taxon>Salmonella</taxon>
    </lineage>
</organism>
<keyword id="KW-0963">Cytoplasm</keyword>
<keyword id="KW-0520">NAD</keyword>
<keyword id="KW-0560">Oxidoreductase</keyword>
<dbReference type="EC" id="1.1.1.130" evidence="1"/>
<dbReference type="EMBL" id="CP000026">
    <property type="protein sequence ID" value="AAV79324.1"/>
    <property type="molecule type" value="Genomic_DNA"/>
</dbReference>
<dbReference type="SMR" id="Q5PLN6"/>
<dbReference type="KEGG" id="spt:SPA3519"/>
<dbReference type="HOGENOM" id="CLU_040452_4_0_6"/>
<dbReference type="Proteomes" id="UP000008185">
    <property type="component" value="Chromosome"/>
</dbReference>
<dbReference type="GO" id="GO:0005737">
    <property type="term" value="C:cytoplasm"/>
    <property type="evidence" value="ECO:0007669"/>
    <property type="project" value="UniProtKB-SubCell"/>
</dbReference>
<dbReference type="GO" id="GO:0047559">
    <property type="term" value="F:3-dehydro-L-gulonate 2-dehydrogenase activity"/>
    <property type="evidence" value="ECO:0007669"/>
    <property type="project" value="UniProtKB-UniRule"/>
</dbReference>
<dbReference type="GO" id="GO:0070403">
    <property type="term" value="F:NAD+ binding"/>
    <property type="evidence" value="ECO:0007669"/>
    <property type="project" value="InterPro"/>
</dbReference>
<dbReference type="Gene3D" id="1.10.1530.10">
    <property type="match status" value="1"/>
</dbReference>
<dbReference type="Gene3D" id="3.30.1370.60">
    <property type="entry name" value="Hypothetical oxidoreductase yiak, domain 2"/>
    <property type="match status" value="1"/>
</dbReference>
<dbReference type="Gene3D" id="3.30.60.50">
    <property type="entry name" value="Hypothetical oxidoreductase yiak, domain 3"/>
    <property type="match status" value="1"/>
</dbReference>
<dbReference type="HAMAP" id="MF_00820">
    <property type="entry name" value="Diketo_gul_reduc"/>
    <property type="match status" value="1"/>
</dbReference>
<dbReference type="InterPro" id="IPR023689">
    <property type="entry name" value="Diketo_gul_Rdtase"/>
</dbReference>
<dbReference type="InterPro" id="IPR043144">
    <property type="entry name" value="Mal/L-sulf/L-lact_DH-like_ah"/>
</dbReference>
<dbReference type="InterPro" id="IPR043143">
    <property type="entry name" value="Mal/L-sulf/L-lact_DH-like_NADP"/>
</dbReference>
<dbReference type="InterPro" id="IPR036111">
    <property type="entry name" value="Mal/L-sulfo/L-lacto_DH-like_sf"/>
</dbReference>
<dbReference type="InterPro" id="IPR003767">
    <property type="entry name" value="Malate/L-lactate_DH-like"/>
</dbReference>
<dbReference type="NCBIfam" id="NF009750">
    <property type="entry name" value="PRK13260.1"/>
    <property type="match status" value="1"/>
</dbReference>
<dbReference type="PANTHER" id="PTHR11091:SF3">
    <property type="entry name" value="2,3-DIKETO-L-GULONATE REDUCTASE"/>
    <property type="match status" value="1"/>
</dbReference>
<dbReference type="PANTHER" id="PTHR11091">
    <property type="entry name" value="OXIDOREDUCTASE-RELATED"/>
    <property type="match status" value="1"/>
</dbReference>
<dbReference type="Pfam" id="PF02615">
    <property type="entry name" value="Ldh_2"/>
    <property type="match status" value="1"/>
</dbReference>
<dbReference type="SUPFAM" id="SSF89733">
    <property type="entry name" value="L-sulfolactate dehydrogenase-like"/>
    <property type="match status" value="1"/>
</dbReference>
<proteinExistence type="inferred from homology"/>
<reference key="1">
    <citation type="journal article" date="2004" name="Nat. Genet.">
        <title>Comparison of genome degradation in Paratyphi A and Typhi, human-restricted serovars of Salmonella enterica that cause typhoid.</title>
        <authorList>
            <person name="McClelland M."/>
            <person name="Sanderson K.E."/>
            <person name="Clifton S.W."/>
            <person name="Latreille P."/>
            <person name="Porwollik S."/>
            <person name="Sabo A."/>
            <person name="Meyer R."/>
            <person name="Bieri T."/>
            <person name="Ozersky P."/>
            <person name="McLellan M."/>
            <person name="Harkins C.R."/>
            <person name="Wang C."/>
            <person name="Nguyen C."/>
            <person name="Berghoff A."/>
            <person name="Elliott G."/>
            <person name="Kohlberg S."/>
            <person name="Strong C."/>
            <person name="Du F."/>
            <person name="Carter J."/>
            <person name="Kremizki C."/>
            <person name="Layman D."/>
            <person name="Leonard S."/>
            <person name="Sun H."/>
            <person name="Fulton L."/>
            <person name="Nash W."/>
            <person name="Miner T."/>
            <person name="Minx P."/>
            <person name="Delehaunty K."/>
            <person name="Fronick C."/>
            <person name="Magrini V."/>
            <person name="Nhan M."/>
            <person name="Warren W."/>
            <person name="Florea L."/>
            <person name="Spieth J."/>
            <person name="Wilson R.K."/>
        </authorList>
    </citation>
    <scope>NUCLEOTIDE SEQUENCE [LARGE SCALE GENOMIC DNA]</scope>
    <source>
        <strain>ATCC 9150 / SARB42</strain>
    </source>
</reference>
<gene>
    <name evidence="1" type="primary">dlgD</name>
    <name type="ordered locus">SPA3519</name>
</gene>
<sequence length="332" mass="36699">MKVTFEELKGAFYRVLRSRNIAEDTADACAEMFARTTESGVYSHGVNRFPRFIQQLDNGDIIPDAKPQRVTSLGAIEQWDAQRAIGNLTAKKMMDRAIELASDHGIGLVALRNANHWMRGGSYGWQAAEKGYIGICWTNSIAVMPPWGAKECRIGTNPLIVAIPSTPITMVDMSMSMFSYGMLEVNRLAGRELPVDGGFDDNGQLTKEPGVIEKNRRILPMGYWKGSGLSIVLDMIATLLSNGSSVAEVTQENSDEYGVSQIFIAIEVDKLIDGATRDAKLQRIMDFITTAERADDNVAIRLPGHEFTKLLDDNRRHGITVDDSVWAKIQAL</sequence>
<name>DLGD_SALPA</name>
<feature type="chain" id="PRO_0000083836" description="2,3-diketo-L-gulonate reductase">
    <location>
        <begin position="1"/>
        <end position="332"/>
    </location>
</feature>
<feature type="active site" description="Proton donor" evidence="1">
    <location>
        <position position="44"/>
    </location>
</feature>
<feature type="binding site" evidence="1">
    <location>
        <begin position="168"/>
        <end position="174"/>
    </location>
    <ligand>
        <name>NAD(+)</name>
        <dbReference type="ChEBI" id="CHEBI:57540"/>
    </ligand>
</feature>
<feature type="binding site" evidence="1">
    <location>
        <begin position="224"/>
        <end position="225"/>
    </location>
    <ligand>
        <name>NAD(+)</name>
        <dbReference type="ChEBI" id="CHEBI:57540"/>
    </ligand>
</feature>
<feature type="binding site" evidence="1">
    <location>
        <begin position="304"/>
        <end position="306"/>
    </location>
    <ligand>
        <name>NAD(+)</name>
        <dbReference type="ChEBI" id="CHEBI:57540"/>
    </ligand>
</feature>
<accession>Q5PLN6</accession>